<evidence type="ECO:0000255" key="1">
    <source>
        <dbReference type="HAMAP-Rule" id="MF_00435"/>
    </source>
</evidence>
<evidence type="ECO:0000255" key="2">
    <source>
        <dbReference type="PROSITE-ProRule" id="PRU01197"/>
    </source>
</evidence>
<evidence type="ECO:0000255" key="3">
    <source>
        <dbReference type="PROSITE-ProRule" id="PRU01198"/>
    </source>
</evidence>
<organism>
    <name type="scientific">Pseudomonas fluorescens (strain ATCC BAA-477 / NRRL B-23932 / Pf-5)</name>
    <dbReference type="NCBI Taxonomy" id="220664"/>
    <lineage>
        <taxon>Bacteria</taxon>
        <taxon>Pseudomonadati</taxon>
        <taxon>Pseudomonadota</taxon>
        <taxon>Gammaproteobacteria</taxon>
        <taxon>Pseudomonadales</taxon>
        <taxon>Pseudomonadaceae</taxon>
        <taxon>Pseudomonas</taxon>
    </lineage>
</organism>
<reference key="1">
    <citation type="journal article" date="2005" name="Nat. Biotechnol.">
        <title>Complete genome sequence of the plant commensal Pseudomonas fluorescens Pf-5.</title>
        <authorList>
            <person name="Paulsen I.T."/>
            <person name="Press C.M."/>
            <person name="Ravel J."/>
            <person name="Kobayashi D.Y."/>
            <person name="Myers G.S.A."/>
            <person name="Mavrodi D.V."/>
            <person name="DeBoy R.T."/>
            <person name="Seshadri R."/>
            <person name="Ren Q."/>
            <person name="Madupu R."/>
            <person name="Dodson R.J."/>
            <person name="Durkin A.S."/>
            <person name="Brinkac L.M."/>
            <person name="Daugherty S.C."/>
            <person name="Sullivan S.A."/>
            <person name="Rosovitz M.J."/>
            <person name="Gwinn M.L."/>
            <person name="Zhou L."/>
            <person name="Schneider D.J."/>
            <person name="Cartinhour S.W."/>
            <person name="Nelson W.C."/>
            <person name="Weidman J."/>
            <person name="Watkins K."/>
            <person name="Tran K."/>
            <person name="Khouri H."/>
            <person name="Pierson E.A."/>
            <person name="Pierson L.S. III"/>
            <person name="Thomashow L.S."/>
            <person name="Loper J.E."/>
        </authorList>
    </citation>
    <scope>NUCLEOTIDE SEQUENCE [LARGE SCALE GENOMIC DNA]</scope>
    <source>
        <strain>ATCC BAA-477 / NRRL B-23932 / Pf-5</strain>
    </source>
</reference>
<sequence length="338" mass="36236">MKVFYDKDCDLSIIQGKKVAIIGYGSQGHAQACNLKDSGVDVTVGLRKGSATVAKAEAHGLKVTDVAAAVAGADLVMILTPDEFQSQLYKNEIEPNIKKGATLAFSHGFAIHYNQVVPRADLDVIMIAPKAPGHTVRSEFVKGGGIPDLIAIYQDASGNAKNVALSYAAGVGGGRTGIIETTFKDETETDLFGEQAVLCGGTVELVKAGFETLVEAGYAPEMAYFECLHELKLIVDLMYEGGIANMNYSISNNAEYGEYVTGPEVINAESRQAMRNALKRIQDGEYAKMFISEGATGYPSMTAKRRNNAAHGIEIIGEQLRSMMPWIGANKIVDKAKN</sequence>
<protein>
    <recommendedName>
        <fullName evidence="1">Ketol-acid reductoisomerase (NADP(+))</fullName>
        <shortName evidence="1">KARI</shortName>
        <ecNumber evidence="1">1.1.1.86</ecNumber>
    </recommendedName>
    <alternativeName>
        <fullName evidence="1">Acetohydroxy-acid isomeroreductase</fullName>
        <shortName evidence="1">AHIR</shortName>
    </alternativeName>
    <alternativeName>
        <fullName evidence="1">Alpha-keto-beta-hydroxylacyl reductoisomerase</fullName>
    </alternativeName>
    <alternativeName>
        <fullName evidence="1">Ketol-acid reductoisomerase type 1</fullName>
    </alternativeName>
    <alternativeName>
        <fullName evidence="1">Ketol-acid reductoisomerase type I</fullName>
    </alternativeName>
</protein>
<feature type="chain" id="PRO_0000226190" description="Ketol-acid reductoisomerase (NADP(+))">
    <location>
        <begin position="1"/>
        <end position="338"/>
    </location>
</feature>
<feature type="domain" description="KARI N-terminal Rossmann" evidence="2">
    <location>
        <begin position="1"/>
        <end position="181"/>
    </location>
</feature>
<feature type="domain" description="KARI C-terminal knotted" evidence="3">
    <location>
        <begin position="182"/>
        <end position="327"/>
    </location>
</feature>
<feature type="active site" evidence="1">
    <location>
        <position position="107"/>
    </location>
</feature>
<feature type="binding site" evidence="1">
    <location>
        <begin position="24"/>
        <end position="27"/>
    </location>
    <ligand>
        <name>NADP(+)</name>
        <dbReference type="ChEBI" id="CHEBI:58349"/>
    </ligand>
</feature>
<feature type="binding site" evidence="1">
    <location>
        <position position="47"/>
    </location>
    <ligand>
        <name>NADP(+)</name>
        <dbReference type="ChEBI" id="CHEBI:58349"/>
    </ligand>
</feature>
<feature type="binding site" evidence="1">
    <location>
        <position position="50"/>
    </location>
    <ligand>
        <name>NADP(+)</name>
        <dbReference type="ChEBI" id="CHEBI:58349"/>
    </ligand>
</feature>
<feature type="binding site" evidence="1">
    <location>
        <position position="52"/>
    </location>
    <ligand>
        <name>NADP(+)</name>
        <dbReference type="ChEBI" id="CHEBI:58349"/>
    </ligand>
</feature>
<feature type="binding site" evidence="1">
    <location>
        <begin position="82"/>
        <end position="85"/>
    </location>
    <ligand>
        <name>NADP(+)</name>
        <dbReference type="ChEBI" id="CHEBI:58349"/>
    </ligand>
</feature>
<feature type="binding site" evidence="1">
    <location>
        <position position="133"/>
    </location>
    <ligand>
        <name>NADP(+)</name>
        <dbReference type="ChEBI" id="CHEBI:58349"/>
    </ligand>
</feature>
<feature type="binding site" evidence="1">
    <location>
        <position position="190"/>
    </location>
    <ligand>
        <name>Mg(2+)</name>
        <dbReference type="ChEBI" id="CHEBI:18420"/>
        <label>1</label>
    </ligand>
</feature>
<feature type="binding site" evidence="1">
    <location>
        <position position="190"/>
    </location>
    <ligand>
        <name>Mg(2+)</name>
        <dbReference type="ChEBI" id="CHEBI:18420"/>
        <label>2</label>
    </ligand>
</feature>
<feature type="binding site" evidence="1">
    <location>
        <position position="194"/>
    </location>
    <ligand>
        <name>Mg(2+)</name>
        <dbReference type="ChEBI" id="CHEBI:18420"/>
        <label>1</label>
    </ligand>
</feature>
<feature type="binding site" evidence="1">
    <location>
        <position position="226"/>
    </location>
    <ligand>
        <name>Mg(2+)</name>
        <dbReference type="ChEBI" id="CHEBI:18420"/>
        <label>2</label>
    </ligand>
</feature>
<feature type="binding site" evidence="1">
    <location>
        <position position="230"/>
    </location>
    <ligand>
        <name>Mg(2+)</name>
        <dbReference type="ChEBI" id="CHEBI:18420"/>
        <label>2</label>
    </ligand>
</feature>
<feature type="binding site" evidence="1">
    <location>
        <position position="251"/>
    </location>
    <ligand>
        <name>substrate</name>
    </ligand>
</feature>
<proteinExistence type="inferred from homology"/>
<gene>
    <name evidence="1" type="primary">ilvC</name>
    <name type="ordered locus">PFL_5253</name>
</gene>
<keyword id="KW-0028">Amino-acid biosynthesis</keyword>
<keyword id="KW-0100">Branched-chain amino acid biosynthesis</keyword>
<keyword id="KW-0460">Magnesium</keyword>
<keyword id="KW-0479">Metal-binding</keyword>
<keyword id="KW-0521">NADP</keyword>
<keyword id="KW-0560">Oxidoreductase</keyword>
<accession>Q4K608</accession>
<name>ILVC_PSEF5</name>
<comment type="function">
    <text evidence="1">Involved in the biosynthesis of branched-chain amino acids (BCAA). Catalyzes an alkyl-migration followed by a ketol-acid reduction of (S)-2-acetolactate (S2AL) to yield (R)-2,3-dihydroxy-isovalerate. In the isomerase reaction, S2AL is rearranged via a Mg-dependent methyl migration to produce 3-hydroxy-3-methyl-2-ketobutyrate (HMKB). In the reductase reaction, this 2-ketoacid undergoes a metal-dependent reduction by NADPH to yield (R)-2,3-dihydroxy-isovalerate.</text>
</comment>
<comment type="catalytic activity">
    <reaction evidence="1">
        <text>(2R)-2,3-dihydroxy-3-methylbutanoate + NADP(+) = (2S)-2-acetolactate + NADPH + H(+)</text>
        <dbReference type="Rhea" id="RHEA:22068"/>
        <dbReference type="ChEBI" id="CHEBI:15378"/>
        <dbReference type="ChEBI" id="CHEBI:49072"/>
        <dbReference type="ChEBI" id="CHEBI:57783"/>
        <dbReference type="ChEBI" id="CHEBI:58349"/>
        <dbReference type="ChEBI" id="CHEBI:58476"/>
        <dbReference type="EC" id="1.1.1.86"/>
    </reaction>
</comment>
<comment type="catalytic activity">
    <reaction evidence="1">
        <text>(2R,3R)-2,3-dihydroxy-3-methylpentanoate + NADP(+) = (S)-2-ethyl-2-hydroxy-3-oxobutanoate + NADPH + H(+)</text>
        <dbReference type="Rhea" id="RHEA:13493"/>
        <dbReference type="ChEBI" id="CHEBI:15378"/>
        <dbReference type="ChEBI" id="CHEBI:49256"/>
        <dbReference type="ChEBI" id="CHEBI:49258"/>
        <dbReference type="ChEBI" id="CHEBI:57783"/>
        <dbReference type="ChEBI" id="CHEBI:58349"/>
        <dbReference type="EC" id="1.1.1.86"/>
    </reaction>
</comment>
<comment type="cofactor">
    <cofactor evidence="1">
        <name>Mg(2+)</name>
        <dbReference type="ChEBI" id="CHEBI:18420"/>
    </cofactor>
    <text evidence="1">Binds 2 magnesium ions per subunit.</text>
</comment>
<comment type="pathway">
    <text evidence="1">Amino-acid biosynthesis; L-isoleucine biosynthesis; L-isoleucine from 2-oxobutanoate: step 2/4.</text>
</comment>
<comment type="pathway">
    <text evidence="1">Amino-acid biosynthesis; L-valine biosynthesis; L-valine from pyruvate: step 2/4.</text>
</comment>
<comment type="similarity">
    <text evidence="1">Belongs to the ketol-acid reductoisomerase family.</text>
</comment>
<dbReference type="EC" id="1.1.1.86" evidence="1"/>
<dbReference type="EMBL" id="CP000076">
    <property type="protein sequence ID" value="AAY94467.1"/>
    <property type="molecule type" value="Genomic_DNA"/>
</dbReference>
<dbReference type="RefSeq" id="WP_007959661.1">
    <property type="nucleotide sequence ID" value="NC_004129.6"/>
</dbReference>
<dbReference type="SMR" id="Q4K608"/>
<dbReference type="STRING" id="220664.PFL_5253"/>
<dbReference type="GeneID" id="93491118"/>
<dbReference type="KEGG" id="pfl:PFL_5253"/>
<dbReference type="eggNOG" id="COG0059">
    <property type="taxonomic scope" value="Bacteria"/>
</dbReference>
<dbReference type="HOGENOM" id="CLU_033821_0_1_6"/>
<dbReference type="UniPathway" id="UPA00047">
    <property type="reaction ID" value="UER00056"/>
</dbReference>
<dbReference type="UniPathway" id="UPA00049">
    <property type="reaction ID" value="UER00060"/>
</dbReference>
<dbReference type="Proteomes" id="UP000008540">
    <property type="component" value="Chromosome"/>
</dbReference>
<dbReference type="GO" id="GO:0005829">
    <property type="term" value="C:cytosol"/>
    <property type="evidence" value="ECO:0007669"/>
    <property type="project" value="TreeGrafter"/>
</dbReference>
<dbReference type="GO" id="GO:0004455">
    <property type="term" value="F:ketol-acid reductoisomerase activity"/>
    <property type="evidence" value="ECO:0007669"/>
    <property type="project" value="UniProtKB-UniRule"/>
</dbReference>
<dbReference type="GO" id="GO:0000287">
    <property type="term" value="F:magnesium ion binding"/>
    <property type="evidence" value="ECO:0007669"/>
    <property type="project" value="UniProtKB-UniRule"/>
</dbReference>
<dbReference type="GO" id="GO:0050661">
    <property type="term" value="F:NADP binding"/>
    <property type="evidence" value="ECO:0007669"/>
    <property type="project" value="InterPro"/>
</dbReference>
<dbReference type="GO" id="GO:0009097">
    <property type="term" value="P:isoleucine biosynthetic process"/>
    <property type="evidence" value="ECO:0007669"/>
    <property type="project" value="UniProtKB-UniRule"/>
</dbReference>
<dbReference type="GO" id="GO:0009099">
    <property type="term" value="P:L-valine biosynthetic process"/>
    <property type="evidence" value="ECO:0007669"/>
    <property type="project" value="UniProtKB-UniRule"/>
</dbReference>
<dbReference type="FunFam" id="3.40.50.720:FF:000023">
    <property type="entry name" value="Ketol-acid reductoisomerase (NADP(+))"/>
    <property type="match status" value="1"/>
</dbReference>
<dbReference type="Gene3D" id="6.10.240.10">
    <property type="match status" value="1"/>
</dbReference>
<dbReference type="Gene3D" id="3.40.50.720">
    <property type="entry name" value="NAD(P)-binding Rossmann-like Domain"/>
    <property type="match status" value="1"/>
</dbReference>
<dbReference type="HAMAP" id="MF_00435">
    <property type="entry name" value="IlvC"/>
    <property type="match status" value="1"/>
</dbReference>
<dbReference type="InterPro" id="IPR008927">
    <property type="entry name" value="6-PGluconate_DH-like_C_sf"/>
</dbReference>
<dbReference type="InterPro" id="IPR013023">
    <property type="entry name" value="KARI"/>
</dbReference>
<dbReference type="InterPro" id="IPR000506">
    <property type="entry name" value="KARI_C"/>
</dbReference>
<dbReference type="InterPro" id="IPR013116">
    <property type="entry name" value="KARI_N"/>
</dbReference>
<dbReference type="InterPro" id="IPR014359">
    <property type="entry name" value="KARI_prok"/>
</dbReference>
<dbReference type="InterPro" id="IPR036291">
    <property type="entry name" value="NAD(P)-bd_dom_sf"/>
</dbReference>
<dbReference type="NCBIfam" id="TIGR00465">
    <property type="entry name" value="ilvC"/>
    <property type="match status" value="1"/>
</dbReference>
<dbReference type="NCBIfam" id="NF004017">
    <property type="entry name" value="PRK05479.1"/>
    <property type="match status" value="1"/>
</dbReference>
<dbReference type="NCBIfam" id="NF009940">
    <property type="entry name" value="PRK13403.1"/>
    <property type="match status" value="1"/>
</dbReference>
<dbReference type="PANTHER" id="PTHR21371">
    <property type="entry name" value="KETOL-ACID REDUCTOISOMERASE, MITOCHONDRIAL"/>
    <property type="match status" value="1"/>
</dbReference>
<dbReference type="PANTHER" id="PTHR21371:SF1">
    <property type="entry name" value="KETOL-ACID REDUCTOISOMERASE, MITOCHONDRIAL"/>
    <property type="match status" value="1"/>
</dbReference>
<dbReference type="Pfam" id="PF01450">
    <property type="entry name" value="KARI_C"/>
    <property type="match status" value="1"/>
</dbReference>
<dbReference type="Pfam" id="PF07991">
    <property type="entry name" value="KARI_N"/>
    <property type="match status" value="1"/>
</dbReference>
<dbReference type="PIRSF" id="PIRSF000116">
    <property type="entry name" value="IlvC_gammaproteo"/>
    <property type="match status" value="1"/>
</dbReference>
<dbReference type="SUPFAM" id="SSF48179">
    <property type="entry name" value="6-phosphogluconate dehydrogenase C-terminal domain-like"/>
    <property type="match status" value="1"/>
</dbReference>
<dbReference type="SUPFAM" id="SSF51735">
    <property type="entry name" value="NAD(P)-binding Rossmann-fold domains"/>
    <property type="match status" value="1"/>
</dbReference>
<dbReference type="PROSITE" id="PS51851">
    <property type="entry name" value="KARI_C"/>
    <property type="match status" value="1"/>
</dbReference>
<dbReference type="PROSITE" id="PS51850">
    <property type="entry name" value="KARI_N"/>
    <property type="match status" value="1"/>
</dbReference>